<reference key="1">
    <citation type="submission" date="2007-06" db="EMBL/GenBank/DDBJ databases">
        <title>Complete sequence of Marinomonas sp. MWYL1.</title>
        <authorList>
            <consortium name="US DOE Joint Genome Institute"/>
            <person name="Copeland A."/>
            <person name="Lucas S."/>
            <person name="Lapidus A."/>
            <person name="Barry K."/>
            <person name="Glavina del Rio T."/>
            <person name="Dalin E."/>
            <person name="Tice H."/>
            <person name="Pitluck S."/>
            <person name="Kiss H."/>
            <person name="Brettin T."/>
            <person name="Bruce D."/>
            <person name="Detter J.C."/>
            <person name="Han C."/>
            <person name="Schmutz J."/>
            <person name="Larimer F."/>
            <person name="Land M."/>
            <person name="Hauser L."/>
            <person name="Kyrpides N."/>
            <person name="Kim E."/>
            <person name="Johnston A.W.B."/>
            <person name="Todd J.D."/>
            <person name="Rogers R."/>
            <person name="Wexler M."/>
            <person name="Bond P.L."/>
            <person name="Li Y."/>
            <person name="Richardson P."/>
        </authorList>
    </citation>
    <scope>NUCLEOTIDE SEQUENCE [LARGE SCALE GENOMIC DNA]</scope>
    <source>
        <strain>MWYL1</strain>
    </source>
</reference>
<keyword id="KW-0131">Cell cycle</keyword>
<keyword id="KW-0132">Cell division</keyword>
<keyword id="KW-0574">Periplasm</keyword>
<keyword id="KW-0732">Signal</keyword>
<sequence>MMFKKCLSVLFTCLIFISSARAQLVIEITSGADQLLPIAVVPFGYEGVDALPEDIAQIVEADLARSGLFQPIPRSNMLSMPSKEADVFYRDWRLLKSDYVVIGAIKKLPNNQYRIGFELLNVLSQKPVQKHSSIDVSARNFRDAAHYISDKVYELLTGTRGAFSTRILYVTAEGDKKAPLFKLQVADADGHRPQVVVESKEPILSPSWSMDGRKIAYVMFRNRRPNIFIQELATGKRQQIAQFRGLNGAPAWSPDGKKLALVLSKDNNPEIYTLDIATQKLERMTNHYAIDTEPSWEPDGKGIVFTSDRGGNPQIYRLDVNSKRVERVTFEGDLNTRARMTPDGRYLVTVQKNDGNYHIALQDMKTGRVQILTETYLDESPSIAPNGSMVMYATTYQGKGILAVVSVDGLVKYRLPSADGDVREPSWSPYFK</sequence>
<proteinExistence type="inferred from homology"/>
<protein>
    <recommendedName>
        <fullName evidence="1">Tol-Pal system protein TolB</fullName>
    </recommendedName>
</protein>
<feature type="signal peptide" evidence="1">
    <location>
        <begin position="1"/>
        <end position="22"/>
    </location>
</feature>
<feature type="chain" id="PRO_5000259440" description="Tol-Pal system protein TolB" evidence="1">
    <location>
        <begin position="23"/>
        <end position="432"/>
    </location>
</feature>
<accession>A6VXD7</accession>
<evidence type="ECO:0000255" key="1">
    <source>
        <dbReference type="HAMAP-Rule" id="MF_00671"/>
    </source>
</evidence>
<gene>
    <name evidence="1" type="primary">tolB</name>
    <name type="ordered locus">Mmwyl1_2194</name>
</gene>
<dbReference type="EMBL" id="CP000749">
    <property type="protein sequence ID" value="ABR71116.1"/>
    <property type="molecule type" value="Genomic_DNA"/>
</dbReference>
<dbReference type="SMR" id="A6VXD7"/>
<dbReference type="STRING" id="400668.Mmwyl1_2194"/>
<dbReference type="KEGG" id="mmw:Mmwyl1_2194"/>
<dbReference type="eggNOG" id="COG0823">
    <property type="taxonomic scope" value="Bacteria"/>
</dbReference>
<dbReference type="HOGENOM" id="CLU_047123_0_0_6"/>
<dbReference type="OrthoDB" id="9802240at2"/>
<dbReference type="GO" id="GO:0042597">
    <property type="term" value="C:periplasmic space"/>
    <property type="evidence" value="ECO:0007669"/>
    <property type="project" value="UniProtKB-SubCell"/>
</dbReference>
<dbReference type="GO" id="GO:0051301">
    <property type="term" value="P:cell division"/>
    <property type="evidence" value="ECO:0007669"/>
    <property type="project" value="UniProtKB-UniRule"/>
</dbReference>
<dbReference type="GO" id="GO:0017038">
    <property type="term" value="P:protein import"/>
    <property type="evidence" value="ECO:0007669"/>
    <property type="project" value="InterPro"/>
</dbReference>
<dbReference type="Gene3D" id="2.120.10.30">
    <property type="entry name" value="TolB, C-terminal domain"/>
    <property type="match status" value="1"/>
</dbReference>
<dbReference type="Gene3D" id="3.40.50.10070">
    <property type="entry name" value="TolB, N-terminal domain"/>
    <property type="match status" value="1"/>
</dbReference>
<dbReference type="HAMAP" id="MF_00671">
    <property type="entry name" value="TolB"/>
    <property type="match status" value="1"/>
</dbReference>
<dbReference type="InterPro" id="IPR011042">
    <property type="entry name" value="6-blade_b-propeller_TolB-like"/>
</dbReference>
<dbReference type="InterPro" id="IPR011659">
    <property type="entry name" value="PD40"/>
</dbReference>
<dbReference type="InterPro" id="IPR014167">
    <property type="entry name" value="Tol-Pal_TolB"/>
</dbReference>
<dbReference type="InterPro" id="IPR007195">
    <property type="entry name" value="TolB_N"/>
</dbReference>
<dbReference type="NCBIfam" id="TIGR02800">
    <property type="entry name" value="propeller_TolB"/>
    <property type="match status" value="1"/>
</dbReference>
<dbReference type="PANTHER" id="PTHR36842:SF1">
    <property type="entry name" value="PROTEIN TOLB"/>
    <property type="match status" value="1"/>
</dbReference>
<dbReference type="PANTHER" id="PTHR36842">
    <property type="entry name" value="PROTEIN TOLB HOMOLOG"/>
    <property type="match status" value="1"/>
</dbReference>
<dbReference type="Pfam" id="PF07676">
    <property type="entry name" value="PD40"/>
    <property type="match status" value="3"/>
</dbReference>
<dbReference type="Pfam" id="PF04052">
    <property type="entry name" value="TolB_N"/>
    <property type="match status" value="1"/>
</dbReference>
<dbReference type="SUPFAM" id="SSF52964">
    <property type="entry name" value="TolB, N-terminal domain"/>
    <property type="match status" value="1"/>
</dbReference>
<dbReference type="SUPFAM" id="SSF69304">
    <property type="entry name" value="Tricorn protease N-terminal domain"/>
    <property type="match status" value="1"/>
</dbReference>
<comment type="function">
    <text evidence="1">Part of the Tol-Pal system, which plays a role in outer membrane invagination during cell division and is important for maintaining outer membrane integrity.</text>
</comment>
<comment type="subunit">
    <text evidence="1">The Tol-Pal system is composed of five core proteins: the inner membrane proteins TolA, TolQ and TolR, the periplasmic protein TolB and the outer membrane protein Pal. They form a network linking the inner and outer membranes and the peptidoglycan layer.</text>
</comment>
<comment type="subcellular location">
    <subcellularLocation>
        <location evidence="1">Periplasm</location>
    </subcellularLocation>
</comment>
<comment type="similarity">
    <text evidence="1">Belongs to the TolB family.</text>
</comment>
<name>TOLB_MARMS</name>
<organism>
    <name type="scientific">Marinomonas sp. (strain MWYL1)</name>
    <dbReference type="NCBI Taxonomy" id="400668"/>
    <lineage>
        <taxon>Bacteria</taxon>
        <taxon>Pseudomonadati</taxon>
        <taxon>Pseudomonadota</taxon>
        <taxon>Gammaproteobacteria</taxon>
        <taxon>Oceanospirillales</taxon>
        <taxon>Oceanospirillaceae</taxon>
        <taxon>Marinomonas</taxon>
    </lineage>
</organism>